<accession>Q6PBF0</accession>
<accession>Q28HP9</accession>
<gene>
    <name type="primary">rpl8</name>
    <name type="ORF">TTpA008p15.1</name>
</gene>
<evidence type="ECO:0000250" key="1"/>
<evidence type="ECO:0000250" key="2">
    <source>
        <dbReference type="UniProtKB" id="P62917"/>
    </source>
</evidence>
<evidence type="ECO:0000256" key="3">
    <source>
        <dbReference type="SAM" id="MobiDB-lite"/>
    </source>
</evidence>
<evidence type="ECO:0000305" key="4"/>
<feature type="initiator methionine" description="Removed" evidence="1">
    <location>
        <position position="1"/>
    </location>
</feature>
<feature type="chain" id="PRO_0000129748" description="Large ribosomal subunit protein uL2">
    <location>
        <begin position="2"/>
        <end position="257"/>
    </location>
</feature>
<feature type="region of interest" description="Disordered" evidence="3">
    <location>
        <begin position="207"/>
        <end position="231"/>
    </location>
</feature>
<reference key="1">
    <citation type="submission" date="2006-03" db="EMBL/GenBank/DDBJ databases">
        <authorList>
            <consortium name="Sanger Xenopus tropicalis EST/cDNA project"/>
        </authorList>
    </citation>
    <scope>NUCLEOTIDE SEQUENCE [LARGE SCALE MRNA]</scope>
    <source>
        <tissue>Tadpole</tissue>
    </source>
</reference>
<reference key="2">
    <citation type="submission" date="2003-10" db="EMBL/GenBank/DDBJ databases">
        <authorList>
            <consortium name="NIH - Xenopus Gene Collection (XGC) project"/>
        </authorList>
    </citation>
    <scope>NUCLEOTIDE SEQUENCE [LARGE SCALE MRNA]</scope>
    <source>
        <tissue>Embryo</tissue>
    </source>
</reference>
<protein>
    <recommendedName>
        <fullName evidence="4">Large ribosomal subunit protein uL2</fullName>
    </recommendedName>
    <alternativeName>
        <fullName>60S ribosomal protein L8</fullName>
    </alternativeName>
</protein>
<name>RL8_XENTR</name>
<comment type="function">
    <text evidence="2">Component of the large ribosomal subunit. The ribosome is a large ribonucleoprotein complex responsible for the synthesis of proteins in the cell.</text>
</comment>
<comment type="subunit">
    <text evidence="2">Component of the large ribosomal subunit.</text>
</comment>
<comment type="subcellular location">
    <subcellularLocation>
        <location>Cytoplasm</location>
    </subcellularLocation>
</comment>
<comment type="similarity">
    <text evidence="4">Belongs to the universal ribosomal protein uL2 family.</text>
</comment>
<organism>
    <name type="scientific">Xenopus tropicalis</name>
    <name type="common">Western clawed frog</name>
    <name type="synonym">Silurana tropicalis</name>
    <dbReference type="NCBI Taxonomy" id="8364"/>
    <lineage>
        <taxon>Eukaryota</taxon>
        <taxon>Metazoa</taxon>
        <taxon>Chordata</taxon>
        <taxon>Craniata</taxon>
        <taxon>Vertebrata</taxon>
        <taxon>Euteleostomi</taxon>
        <taxon>Amphibia</taxon>
        <taxon>Batrachia</taxon>
        <taxon>Anura</taxon>
        <taxon>Pipoidea</taxon>
        <taxon>Pipidae</taxon>
        <taxon>Xenopodinae</taxon>
        <taxon>Xenopus</taxon>
        <taxon>Silurana</taxon>
    </lineage>
</organism>
<proteinExistence type="evidence at transcript level"/>
<sequence length="257" mass="27927">MGRVIRGQRKGAGSVFKAHVKHRKGAAKLRAVDFAERHGYIKGIVKDIIHDPGRGAPLAKVAFRDPYRFKKRTELFVAAEGIHTGQFVYCGKKAQLNIGNVLPVGTMPEGTIVCCVEEKPGDRGKLARASGNYATVISHNPETKKTRVKLPSGSKKVISSANRAIVGVVAGGGRIDKPILKAGRAYHKYKAKRNCWPRVRGVAMNPVEHPFGGGNHQHIGKPSTIRRDAPAGRKVGLIAARRTGRLRGTKTVQEKEN</sequence>
<keyword id="KW-0963">Cytoplasm</keyword>
<keyword id="KW-1185">Reference proteome</keyword>
<keyword id="KW-0687">Ribonucleoprotein</keyword>
<keyword id="KW-0689">Ribosomal protein</keyword>
<keyword id="KW-0694">RNA-binding</keyword>
<keyword id="KW-0699">rRNA-binding</keyword>
<dbReference type="EMBL" id="CR760793">
    <property type="protein sequence ID" value="CAJ83193.1"/>
    <property type="molecule type" value="mRNA"/>
</dbReference>
<dbReference type="EMBL" id="BC059744">
    <property type="protein sequence ID" value="AAH59744.1"/>
    <property type="molecule type" value="mRNA"/>
</dbReference>
<dbReference type="RefSeq" id="NP_988925.1">
    <property type="nucleotide sequence ID" value="NM_203594.1"/>
</dbReference>
<dbReference type="RefSeq" id="XP_012812090.1">
    <property type="nucleotide sequence ID" value="XM_012956636.2"/>
</dbReference>
<dbReference type="SMR" id="Q6PBF0"/>
<dbReference type="FunCoup" id="Q6PBF0">
    <property type="interactions" value="1581"/>
</dbReference>
<dbReference type="STRING" id="8364.ENSXETP00000041938"/>
<dbReference type="PaxDb" id="8364-ENSXETP00000033787"/>
<dbReference type="DNASU" id="394521"/>
<dbReference type="GeneID" id="394521"/>
<dbReference type="KEGG" id="xtr:394521"/>
<dbReference type="AGR" id="Xenbase:XB-GENE-482209"/>
<dbReference type="CTD" id="6132"/>
<dbReference type="Xenbase" id="XB-GENE-482209">
    <property type="gene designation" value="rpl8"/>
</dbReference>
<dbReference type="eggNOG" id="KOG2309">
    <property type="taxonomic scope" value="Eukaryota"/>
</dbReference>
<dbReference type="HOGENOM" id="CLU_036235_0_3_1"/>
<dbReference type="InParanoid" id="Q6PBF0"/>
<dbReference type="OMA" id="GGRHPCT"/>
<dbReference type="OrthoDB" id="10267824at2759"/>
<dbReference type="PhylomeDB" id="Q6PBF0"/>
<dbReference type="TreeFam" id="TF300748"/>
<dbReference type="Reactome" id="R-XTR-156827">
    <property type="pathway name" value="L13a-mediated translational silencing of Ceruloplasmin expression"/>
</dbReference>
<dbReference type="Reactome" id="R-XTR-1799339">
    <property type="pathway name" value="SRP-dependent cotranslational protein targeting to membrane"/>
</dbReference>
<dbReference type="Reactome" id="R-XTR-6791226">
    <property type="pathway name" value="Major pathway of rRNA processing in the nucleolus and cytosol"/>
</dbReference>
<dbReference type="Reactome" id="R-XTR-72689">
    <property type="pathway name" value="Formation of a pool of free 40S subunits"/>
</dbReference>
<dbReference type="Reactome" id="R-XTR-72706">
    <property type="pathway name" value="GTP hydrolysis and joining of the 60S ribosomal subunit"/>
</dbReference>
<dbReference type="Reactome" id="R-XTR-9629569">
    <property type="pathway name" value="Protein hydroxylation"/>
</dbReference>
<dbReference type="Reactome" id="R-XTR-975956">
    <property type="pathway name" value="Nonsense Mediated Decay (NMD) independent of the Exon Junction Complex (EJC)"/>
</dbReference>
<dbReference type="Reactome" id="R-XTR-975957">
    <property type="pathway name" value="Nonsense Mediated Decay (NMD) enhanced by the Exon Junction Complex (EJC)"/>
</dbReference>
<dbReference type="Proteomes" id="UP000008143">
    <property type="component" value="Chromosome 2"/>
</dbReference>
<dbReference type="Bgee" id="ENSXETG00000015483">
    <property type="expression patterns" value="Expressed in structure with developmental contribution from neural crest and 32 other cell types or tissues"/>
</dbReference>
<dbReference type="GO" id="GO:0005737">
    <property type="term" value="C:cytoplasm"/>
    <property type="evidence" value="ECO:0007669"/>
    <property type="project" value="UniProtKB-SubCell"/>
</dbReference>
<dbReference type="GO" id="GO:0015934">
    <property type="term" value="C:large ribosomal subunit"/>
    <property type="evidence" value="ECO:0007669"/>
    <property type="project" value="InterPro"/>
</dbReference>
<dbReference type="GO" id="GO:0019843">
    <property type="term" value="F:rRNA binding"/>
    <property type="evidence" value="ECO:0007669"/>
    <property type="project" value="UniProtKB-KW"/>
</dbReference>
<dbReference type="GO" id="GO:0003735">
    <property type="term" value="F:structural constituent of ribosome"/>
    <property type="evidence" value="ECO:0007669"/>
    <property type="project" value="InterPro"/>
</dbReference>
<dbReference type="GO" id="GO:0006412">
    <property type="term" value="P:translation"/>
    <property type="evidence" value="ECO:0007669"/>
    <property type="project" value="InterPro"/>
</dbReference>
<dbReference type="FunFam" id="4.10.950.10:FF:000002">
    <property type="entry name" value="60S ribosomal protein L2"/>
    <property type="match status" value="1"/>
</dbReference>
<dbReference type="FunFam" id="2.30.30.30:FF:000006">
    <property type="entry name" value="60S ribosomal protein L8"/>
    <property type="match status" value="1"/>
</dbReference>
<dbReference type="FunFam" id="2.40.50.140:FF:000581">
    <property type="entry name" value="Ribosomal protein L8"/>
    <property type="match status" value="1"/>
</dbReference>
<dbReference type="Gene3D" id="2.30.30.30">
    <property type="match status" value="1"/>
</dbReference>
<dbReference type="Gene3D" id="2.40.50.140">
    <property type="entry name" value="Nucleic acid-binding proteins"/>
    <property type="match status" value="1"/>
</dbReference>
<dbReference type="Gene3D" id="4.10.950.10">
    <property type="entry name" value="Ribosomal protein L2, domain 3"/>
    <property type="match status" value="1"/>
</dbReference>
<dbReference type="HAMAP" id="MF_01320_A">
    <property type="entry name" value="Ribosomal_uL2_A"/>
    <property type="match status" value="1"/>
</dbReference>
<dbReference type="InterPro" id="IPR012340">
    <property type="entry name" value="NA-bd_OB-fold"/>
</dbReference>
<dbReference type="InterPro" id="IPR014722">
    <property type="entry name" value="Rib_uL2_dom2"/>
</dbReference>
<dbReference type="InterPro" id="IPR002171">
    <property type="entry name" value="Ribosomal_uL2"/>
</dbReference>
<dbReference type="InterPro" id="IPR023672">
    <property type="entry name" value="Ribosomal_uL2_arc_euk"/>
</dbReference>
<dbReference type="InterPro" id="IPR022669">
    <property type="entry name" value="Ribosomal_uL2_C"/>
</dbReference>
<dbReference type="InterPro" id="IPR022671">
    <property type="entry name" value="Ribosomal_uL2_CS"/>
</dbReference>
<dbReference type="InterPro" id="IPR014726">
    <property type="entry name" value="Ribosomal_uL2_dom3"/>
</dbReference>
<dbReference type="InterPro" id="IPR022666">
    <property type="entry name" value="Ribosomal_uL2_RNA-bd_dom"/>
</dbReference>
<dbReference type="InterPro" id="IPR008991">
    <property type="entry name" value="Translation_prot_SH3-like_sf"/>
</dbReference>
<dbReference type="NCBIfam" id="NF007180">
    <property type="entry name" value="PRK09612.1"/>
    <property type="match status" value="1"/>
</dbReference>
<dbReference type="PANTHER" id="PTHR13691:SF16">
    <property type="entry name" value="LARGE RIBOSOMAL SUBUNIT PROTEIN UL2"/>
    <property type="match status" value="1"/>
</dbReference>
<dbReference type="PANTHER" id="PTHR13691">
    <property type="entry name" value="RIBOSOMAL PROTEIN L2"/>
    <property type="match status" value="1"/>
</dbReference>
<dbReference type="Pfam" id="PF00181">
    <property type="entry name" value="Ribosomal_L2"/>
    <property type="match status" value="1"/>
</dbReference>
<dbReference type="Pfam" id="PF03947">
    <property type="entry name" value="Ribosomal_L2_C"/>
    <property type="match status" value="1"/>
</dbReference>
<dbReference type="PIRSF" id="PIRSF002158">
    <property type="entry name" value="Ribosomal_L2"/>
    <property type="match status" value="1"/>
</dbReference>
<dbReference type="SMART" id="SM01383">
    <property type="entry name" value="Ribosomal_L2"/>
    <property type="match status" value="1"/>
</dbReference>
<dbReference type="SMART" id="SM01382">
    <property type="entry name" value="Ribosomal_L2_C"/>
    <property type="match status" value="1"/>
</dbReference>
<dbReference type="SUPFAM" id="SSF50249">
    <property type="entry name" value="Nucleic acid-binding proteins"/>
    <property type="match status" value="1"/>
</dbReference>
<dbReference type="SUPFAM" id="SSF50104">
    <property type="entry name" value="Translation proteins SH3-like domain"/>
    <property type="match status" value="1"/>
</dbReference>
<dbReference type="PROSITE" id="PS00467">
    <property type="entry name" value="RIBOSOMAL_L2"/>
    <property type="match status" value="1"/>
</dbReference>